<reference key="1">
    <citation type="journal article" date="2002" name="Proc. Natl. Acad. Sci. U.S.A.">
        <title>Extensive mosaic structure revealed by the complete genome sequence of uropathogenic Escherichia coli.</title>
        <authorList>
            <person name="Welch R.A."/>
            <person name="Burland V."/>
            <person name="Plunkett G. III"/>
            <person name="Redford P."/>
            <person name="Roesch P."/>
            <person name="Rasko D."/>
            <person name="Buckles E.L."/>
            <person name="Liou S.-R."/>
            <person name="Boutin A."/>
            <person name="Hackett J."/>
            <person name="Stroud D."/>
            <person name="Mayhew G.F."/>
            <person name="Rose D.J."/>
            <person name="Zhou S."/>
            <person name="Schwartz D.C."/>
            <person name="Perna N.T."/>
            <person name="Mobley H.L.T."/>
            <person name="Donnenberg M.S."/>
            <person name="Blattner F.R."/>
        </authorList>
    </citation>
    <scope>NUCLEOTIDE SEQUENCE [LARGE SCALE GENOMIC DNA]</scope>
    <source>
        <strain>CFT073 / ATCC 700928 / UPEC</strain>
    </source>
</reference>
<name>BFD_ECOL6</name>
<keyword id="KW-0001">2Fe-2S</keyword>
<keyword id="KW-0249">Electron transport</keyword>
<keyword id="KW-0408">Iron</keyword>
<keyword id="KW-0411">Iron-sulfur</keyword>
<keyword id="KW-0479">Metal-binding</keyword>
<keyword id="KW-1185">Reference proteome</keyword>
<keyword id="KW-0813">Transport</keyword>
<accession>P0AE57</accession>
<accession>O68930</accession>
<accession>P13655</accession>
<evidence type="ECO:0000250" key="1">
    <source>
        <dbReference type="UniProtKB" id="Q9HY80"/>
    </source>
</evidence>
<evidence type="ECO:0000305" key="2"/>
<gene>
    <name type="primary">bfd</name>
    <name type="ordered locus">c4108</name>
</gene>
<protein>
    <recommendedName>
        <fullName>Bacterioferritin-associated ferredoxin</fullName>
    </recommendedName>
</protein>
<comment type="function">
    <text evidence="1">Required for mobilization of iron from the bacterioferritin (BFR) complex (By similarity).</text>
</comment>
<comment type="cofactor">
    <cofactor evidence="1">
        <name>[2Fe-2S] cluster</name>
        <dbReference type="ChEBI" id="CHEBI:190135"/>
    </cofactor>
    <text evidence="1">Binds 1 [2Fe-2S] cluster.</text>
</comment>
<comment type="subunit">
    <text evidence="1">Monomer (By similarity). Interacts with bacterioferritin (BFR); up to 12 Bfd proteins can bind to the BFR (By similarity).</text>
</comment>
<comment type="similarity">
    <text evidence="2">Belongs to the Bfd family.</text>
</comment>
<feature type="chain" id="PRO_0000064915" description="Bacterioferritin-associated ferredoxin">
    <location>
        <begin position="1"/>
        <end position="64"/>
    </location>
</feature>
<feature type="binding site" evidence="1">
    <location>
        <position position="4"/>
    </location>
    <ligand>
        <name>[2Fe-2S] cluster</name>
        <dbReference type="ChEBI" id="CHEBI:190135"/>
    </ligand>
</feature>
<feature type="binding site" evidence="1">
    <location>
        <position position="6"/>
    </location>
    <ligand>
        <name>[2Fe-2S] cluster</name>
        <dbReference type="ChEBI" id="CHEBI:190135"/>
    </ligand>
</feature>
<feature type="binding site" evidence="1">
    <location>
        <position position="39"/>
    </location>
    <ligand>
        <name>[2Fe-2S] cluster</name>
        <dbReference type="ChEBI" id="CHEBI:190135"/>
    </ligand>
</feature>
<feature type="binding site" evidence="1">
    <location>
        <position position="42"/>
    </location>
    <ligand>
        <name>[2Fe-2S] cluster</name>
        <dbReference type="ChEBI" id="CHEBI:190135"/>
    </ligand>
</feature>
<dbReference type="EMBL" id="AE014075">
    <property type="protein sequence ID" value="AAN82546.1"/>
    <property type="molecule type" value="Genomic_DNA"/>
</dbReference>
<dbReference type="RefSeq" id="WP_000289085.1">
    <property type="nucleotide sequence ID" value="NZ_CP051263.1"/>
</dbReference>
<dbReference type="SMR" id="P0AE57"/>
<dbReference type="STRING" id="199310.c4108"/>
<dbReference type="GeneID" id="86862265"/>
<dbReference type="KEGG" id="ecc:c4108"/>
<dbReference type="eggNOG" id="COG2906">
    <property type="taxonomic scope" value="Bacteria"/>
</dbReference>
<dbReference type="HOGENOM" id="CLU_159205_3_4_6"/>
<dbReference type="BioCyc" id="ECOL199310:C4108-MONOMER"/>
<dbReference type="Proteomes" id="UP000001410">
    <property type="component" value="Chromosome"/>
</dbReference>
<dbReference type="GO" id="GO:0051537">
    <property type="term" value="F:2 iron, 2 sulfur cluster binding"/>
    <property type="evidence" value="ECO:0007669"/>
    <property type="project" value="UniProtKB-KW"/>
</dbReference>
<dbReference type="GO" id="GO:0046872">
    <property type="term" value="F:metal ion binding"/>
    <property type="evidence" value="ECO:0007669"/>
    <property type="project" value="UniProtKB-KW"/>
</dbReference>
<dbReference type="CDD" id="cd19945">
    <property type="entry name" value="Fer2_BFD"/>
    <property type="match status" value="1"/>
</dbReference>
<dbReference type="FunFam" id="1.10.10.1100:FF:000001">
    <property type="entry name" value="Bacterioferritin-associated ferredoxin"/>
    <property type="match status" value="1"/>
</dbReference>
<dbReference type="Gene3D" id="1.10.10.1100">
    <property type="entry name" value="BFD-like [2Fe-2S]-binding domain"/>
    <property type="match status" value="1"/>
</dbReference>
<dbReference type="InterPro" id="IPR052371">
    <property type="entry name" value="BFD-associated_ferredoxin"/>
</dbReference>
<dbReference type="InterPro" id="IPR007419">
    <property type="entry name" value="BFD-like_2Fe2S-bd_dom"/>
</dbReference>
<dbReference type="InterPro" id="IPR041854">
    <property type="entry name" value="BFD-like_2Fe2S-bd_dom_sf"/>
</dbReference>
<dbReference type="NCBIfam" id="NF007803">
    <property type="entry name" value="PRK10509.1"/>
    <property type="match status" value="1"/>
</dbReference>
<dbReference type="PANTHER" id="PTHR37424">
    <property type="entry name" value="BACTERIOFERRITIN-ASSOCIATED FERREDOXIN"/>
    <property type="match status" value="1"/>
</dbReference>
<dbReference type="PANTHER" id="PTHR37424:SF1">
    <property type="entry name" value="BACTERIOFERRITIN-ASSOCIATED FERREDOXIN"/>
    <property type="match status" value="1"/>
</dbReference>
<dbReference type="Pfam" id="PF04324">
    <property type="entry name" value="Fer2_BFD"/>
    <property type="match status" value="1"/>
</dbReference>
<sequence>MYVCLCNGISDKKIRQAVRQFSPHSFQQLKKFIPVGNQCGKCVRAAREVMEDELMQLPEFKESA</sequence>
<organism>
    <name type="scientific">Escherichia coli O6:H1 (strain CFT073 / ATCC 700928 / UPEC)</name>
    <dbReference type="NCBI Taxonomy" id="199310"/>
    <lineage>
        <taxon>Bacteria</taxon>
        <taxon>Pseudomonadati</taxon>
        <taxon>Pseudomonadota</taxon>
        <taxon>Gammaproteobacteria</taxon>
        <taxon>Enterobacterales</taxon>
        <taxon>Enterobacteriaceae</taxon>
        <taxon>Escherichia</taxon>
    </lineage>
</organism>
<proteinExistence type="inferred from homology"/>